<evidence type="ECO:0000250" key="1"/>
<evidence type="ECO:0000255" key="2">
    <source>
        <dbReference type="PROSITE-ProRule" id="PRU00088"/>
    </source>
</evidence>
<evidence type="ECO:0000305" key="3"/>
<dbReference type="EC" id="1.-.-.-"/>
<dbReference type="EMBL" id="BA000022">
    <property type="protein sequence ID" value="BAA16730.1"/>
    <property type="molecule type" value="Genomic_DNA"/>
</dbReference>
<dbReference type="PIR" id="S74578">
    <property type="entry name" value="S74578"/>
</dbReference>
<dbReference type="SMR" id="P72723"/>
<dbReference type="IntAct" id="P72723">
    <property type="interactions" value="1"/>
</dbReference>
<dbReference type="STRING" id="1148.gene:10497585"/>
<dbReference type="PaxDb" id="1148-1651803"/>
<dbReference type="EnsemblBacteria" id="BAA16730">
    <property type="protein sequence ID" value="BAA16730"/>
    <property type="gene ID" value="BAA16730"/>
</dbReference>
<dbReference type="KEGG" id="syn:sll0217"/>
<dbReference type="eggNOG" id="COG0426">
    <property type="taxonomic scope" value="Bacteria"/>
</dbReference>
<dbReference type="eggNOG" id="COG1853">
    <property type="taxonomic scope" value="Bacteria"/>
</dbReference>
<dbReference type="InParanoid" id="P72723"/>
<dbReference type="PhylomeDB" id="P72723"/>
<dbReference type="Proteomes" id="UP000001425">
    <property type="component" value="Chromosome"/>
</dbReference>
<dbReference type="GO" id="GO:0010181">
    <property type="term" value="F:FMN binding"/>
    <property type="evidence" value="ECO:0007669"/>
    <property type="project" value="InterPro"/>
</dbReference>
<dbReference type="GO" id="GO:0046872">
    <property type="term" value="F:metal ion binding"/>
    <property type="evidence" value="ECO:0007669"/>
    <property type="project" value="UniProtKB-KW"/>
</dbReference>
<dbReference type="GO" id="GO:0016646">
    <property type="term" value="F:oxidoreductase activity, acting on the CH-NH group of donors, NAD or NADP as acceptor"/>
    <property type="evidence" value="ECO:0007669"/>
    <property type="project" value="UniProtKB-ARBA"/>
</dbReference>
<dbReference type="CDD" id="cd07709">
    <property type="entry name" value="flavodiiron_proteins_MBL-fold"/>
    <property type="match status" value="1"/>
</dbReference>
<dbReference type="Gene3D" id="3.40.50.360">
    <property type="match status" value="1"/>
</dbReference>
<dbReference type="Gene3D" id="2.30.110.10">
    <property type="entry name" value="Electron Transport, Fmn-binding Protein, Chain A"/>
    <property type="match status" value="1"/>
</dbReference>
<dbReference type="Gene3D" id="3.60.15.10">
    <property type="entry name" value="Ribonuclease Z/Hydroxyacylglutathione hydrolase-like"/>
    <property type="match status" value="1"/>
</dbReference>
<dbReference type="InterPro" id="IPR002563">
    <property type="entry name" value="Flavin_Rdtase-like_dom"/>
</dbReference>
<dbReference type="InterPro" id="IPR008254">
    <property type="entry name" value="Flavodoxin/NO_synth"/>
</dbReference>
<dbReference type="InterPro" id="IPR029039">
    <property type="entry name" value="Flavoprotein-like_sf"/>
</dbReference>
<dbReference type="InterPro" id="IPR001279">
    <property type="entry name" value="Metallo-B-lactamas"/>
</dbReference>
<dbReference type="InterPro" id="IPR051285">
    <property type="entry name" value="NADH_oxidoreductase_modular"/>
</dbReference>
<dbReference type="InterPro" id="IPR045761">
    <property type="entry name" value="ODP_dom"/>
</dbReference>
<dbReference type="InterPro" id="IPR036866">
    <property type="entry name" value="RibonucZ/Hydroxyglut_hydro"/>
</dbReference>
<dbReference type="InterPro" id="IPR012349">
    <property type="entry name" value="Split_barrel_FMN-bd"/>
</dbReference>
<dbReference type="PANTHER" id="PTHR32145">
    <property type="entry name" value="DIFLAVIN FLAVOPROTEIN A 2-RELATED"/>
    <property type="match status" value="1"/>
</dbReference>
<dbReference type="PANTHER" id="PTHR32145:SF11">
    <property type="entry name" value="DIFLAVIN FLAVOPROTEIN A 2-RELATED"/>
    <property type="match status" value="1"/>
</dbReference>
<dbReference type="Pfam" id="PF01613">
    <property type="entry name" value="Flavin_Reduct"/>
    <property type="match status" value="1"/>
</dbReference>
<dbReference type="Pfam" id="PF19583">
    <property type="entry name" value="ODP"/>
    <property type="match status" value="1"/>
</dbReference>
<dbReference type="SMART" id="SM00903">
    <property type="entry name" value="Flavin_Reduct"/>
    <property type="match status" value="1"/>
</dbReference>
<dbReference type="SMART" id="SM00849">
    <property type="entry name" value="Lactamase_B"/>
    <property type="match status" value="1"/>
</dbReference>
<dbReference type="SUPFAM" id="SSF52218">
    <property type="entry name" value="Flavoproteins"/>
    <property type="match status" value="1"/>
</dbReference>
<dbReference type="SUPFAM" id="SSF50475">
    <property type="entry name" value="FMN-binding split barrel"/>
    <property type="match status" value="1"/>
</dbReference>
<dbReference type="SUPFAM" id="SSF56281">
    <property type="entry name" value="Metallo-hydrolase/oxidoreductase"/>
    <property type="match status" value="1"/>
</dbReference>
<dbReference type="PROSITE" id="PS50902">
    <property type="entry name" value="FLAVODOXIN_LIKE"/>
    <property type="match status" value="1"/>
</dbReference>
<reference key="1">
    <citation type="journal article" date="1996" name="DNA Res.">
        <title>Sequence analysis of the genome of the unicellular cyanobacterium Synechocystis sp. strain PCC6803. II. Sequence determination of the entire genome and assignment of potential protein-coding regions.</title>
        <authorList>
            <person name="Kaneko T."/>
            <person name="Sato S."/>
            <person name="Kotani H."/>
            <person name="Tanaka A."/>
            <person name="Asamizu E."/>
            <person name="Nakamura Y."/>
            <person name="Miyajima N."/>
            <person name="Hirosawa M."/>
            <person name="Sugiura M."/>
            <person name="Sasamoto S."/>
            <person name="Kimura T."/>
            <person name="Hosouchi T."/>
            <person name="Matsuno A."/>
            <person name="Muraki A."/>
            <person name="Nakazaki N."/>
            <person name="Naruo K."/>
            <person name="Okumura S."/>
            <person name="Shimpo S."/>
            <person name="Takeuchi C."/>
            <person name="Wada T."/>
            <person name="Watanabe A."/>
            <person name="Yamada M."/>
            <person name="Yasuda M."/>
            <person name="Tabata S."/>
        </authorList>
    </citation>
    <scope>NUCLEOTIDE SEQUENCE [LARGE SCALE GENOMIC DNA]</scope>
    <source>
        <strain>ATCC 27184 / PCC 6803 / Kazusa</strain>
    </source>
</reference>
<name>DFA2_SYNY3</name>
<comment type="function">
    <text evidence="1">Mediates electron transfer from NADH to oxygen, reducing it to water. This modular protein has 3 redox cofactors, in other organisms the same activity requires 2 or 3 proteins (By similarity).</text>
</comment>
<comment type="cofactor">
    <cofactor>
        <name>Fe cation</name>
        <dbReference type="ChEBI" id="CHEBI:24875"/>
    </cofactor>
    <text>Binds 2 iron ions per subunit.</text>
</comment>
<comment type="miscellaneous">
    <text evidence="1">By homology with NorV in E.coli, may be involved in nitric oxide detoxification.</text>
</comment>
<comment type="similarity">
    <text evidence="3">In the N-terminal section; belongs to the zinc metallo-hydrolase group 3 family.</text>
</comment>
<comment type="similarity">
    <text evidence="3">In the C-terminal section; belongs to the flavodoxin reductase family.</text>
</comment>
<organism>
    <name type="scientific">Synechocystis sp. (strain ATCC 27184 / PCC 6803 / Kazusa)</name>
    <dbReference type="NCBI Taxonomy" id="1111708"/>
    <lineage>
        <taxon>Bacteria</taxon>
        <taxon>Bacillati</taxon>
        <taxon>Cyanobacteriota</taxon>
        <taxon>Cyanophyceae</taxon>
        <taxon>Synechococcales</taxon>
        <taxon>Merismopediaceae</taxon>
        <taxon>Synechocystis</taxon>
    </lineage>
</organism>
<feature type="chain" id="PRO_0000216802" description="Putative diflavin flavoprotein A 2">
    <location>
        <begin position="1"/>
        <end position="578"/>
    </location>
</feature>
<feature type="domain" description="Flavodoxin-like" evidence="2">
    <location>
        <begin position="269"/>
        <end position="406"/>
    </location>
</feature>
<feature type="region of interest" description="Zinc metallo-hydrolase">
    <location>
        <begin position="48"/>
        <end position="240"/>
    </location>
</feature>
<feature type="region of interest" description="Flavodoxin-reductase-like">
    <location>
        <begin position="429"/>
        <end position="578"/>
    </location>
</feature>
<feature type="binding site" evidence="1">
    <location>
        <position position="97"/>
    </location>
    <ligand>
        <name>Fe cation</name>
        <dbReference type="ChEBI" id="CHEBI:24875"/>
        <label>1</label>
    </ligand>
</feature>
<feature type="binding site" evidence="1">
    <location>
        <position position="99"/>
    </location>
    <ligand>
        <name>Fe cation</name>
        <dbReference type="ChEBI" id="CHEBI:24875"/>
        <label>1</label>
    </ligand>
</feature>
<feature type="binding site" evidence="1">
    <location>
        <position position="101"/>
    </location>
    <ligand>
        <name>Fe cation</name>
        <dbReference type="ChEBI" id="CHEBI:24875"/>
        <label>2</label>
    </ligand>
</feature>
<feature type="binding site" evidence="1">
    <location>
        <position position="164"/>
    </location>
    <ligand>
        <name>Fe cation</name>
        <dbReference type="ChEBI" id="CHEBI:24875"/>
        <label>1</label>
    </ligand>
</feature>
<feature type="binding site" evidence="1">
    <location>
        <position position="183"/>
    </location>
    <ligand>
        <name>Fe cation</name>
        <dbReference type="ChEBI" id="CHEBI:24875"/>
        <label>1</label>
    </ligand>
</feature>
<feature type="binding site" evidence="1">
    <location>
        <position position="183"/>
    </location>
    <ligand>
        <name>Fe cation</name>
        <dbReference type="ChEBI" id="CHEBI:24875"/>
        <label>2</label>
    </ligand>
</feature>
<feature type="binding site" evidence="1">
    <location>
        <position position="240"/>
    </location>
    <ligand>
        <name>Fe cation</name>
        <dbReference type="ChEBI" id="CHEBI:24875"/>
        <label>2</label>
    </ligand>
</feature>
<keyword id="KW-0249">Electron transport</keyword>
<keyword id="KW-0408">Iron</keyword>
<keyword id="KW-0479">Metal-binding</keyword>
<keyword id="KW-0560">Oxidoreductase</keyword>
<keyword id="KW-1185">Reference proteome</keyword>
<keyword id="KW-0813">Transport</keyword>
<protein>
    <recommendedName>
        <fullName>Putative diflavin flavoprotein A 2</fullName>
        <ecNumber>1.-.-.-</ecNumber>
    </recommendedName>
</protein>
<accession>P72723</accession>
<sequence>MVTLIDSPTSAAVQPRLTLQTADIAAHTTAIRCLDWDRDRFDIEFELRHGTTYNSFLIRGEKTALIDTSHRKFEAVYLQLLQDLVDLRSLDYLIVNHTEPDHSGLIPDLLELAPQVTVVGSKVAIQFLEKLVHRPFESQIVKSGHSLDLGQGHELQFISAPNLHWPDTILTYDSGTQVLYTCDVFGMHYCDDSLFDETPERLEPDFQYYYNCLMGSNARSVLMALKRIAPLQVVLVATGHGPLLQHHISHWLGQYDAWSQNQVKAETFVALFYVDGYGVSDRLVQTIADGISKTGVAIELVDLSVADTHEVRTLAQCAAGLVVGMPPQSSTSTTLDPLLGTILAAVHPKQVIGLFESGGGQDEPIYPLRNRFQELGLQEAFEPILLKTEPTAATDQLCREAGTDLGQYLTQKQSQQANTDLDPELNQAIGRLSTGLYILTAQKGDVRSAMLASWVIQGSFEPLGIVIAVAKDRAIESLLHPGDTFVLNVLEEDNYQSLMRHFLLRFPPGADRFAGVNTYPAQNGSPILLETLAYLECEVTSRLDGNDHWLVYSTIQTGRVAKLNALTATHHRKLGNHY</sequence>
<gene>
    <name type="primary">dfa2</name>
    <name type="ordered locus">sll0217</name>
</gene>
<proteinExistence type="inferred from homology"/>